<protein>
    <recommendedName>
        <fullName>SLIT and NTRK-like protein 6</fullName>
    </recommendedName>
</protein>
<keyword id="KW-1003">Cell membrane</keyword>
<keyword id="KW-1009">Hearing</keyword>
<keyword id="KW-0433">Leucine-rich repeat</keyword>
<keyword id="KW-0472">Membrane</keyword>
<keyword id="KW-1185">Reference proteome</keyword>
<keyword id="KW-0677">Repeat</keyword>
<keyword id="KW-0716">Sensory transduction</keyword>
<keyword id="KW-0732">Signal</keyword>
<keyword id="KW-0812">Transmembrane</keyword>
<keyword id="KW-1133">Transmembrane helix</keyword>
<keyword id="KW-0844">Vision</keyword>
<sequence>MKLWTYLLYPSLLACLSLQSQSPMPSVRGSCDTLCNCEEKDGIMIINCEEKGINKLSQISVPPSRPFHLSLLNNGLTMLHTNDFSGLTNALSIHLGFNNIADIETGAFNGLGLLKQLHINHNSLEILKEDTFHGLENLEFLQADNNFITIIEPSAFSKLNRLKVLILNDNAIESLPPNIFRFVPLTHLDLRGNQLQTLPYVGFLEHIGRILDLQLEDNKWACNCELLQLKNWLENMPPQSIIGDVICYSPPPFKGSVLSRLKKESFCPTPPVYEEHEDPSGSLLAITSSTSDSRLSSKNTSILKQPTKAPGLIPYLTKPSTQLPVPYCPIPCNCKVLSPSGLLIHCQERNIESLSDLQPPPHNPRKLILAGNIIHTLMKSDLTDYFTLEMLHLGNNRIEVLEEGSFMNLTRLQKLYLNGNHLTKLNKGMFLGLHSLEYLYLEYNAVKEILPGTFNPMPKLKVLYLNNNLLQVLPAHIFLGIPLTRVNLKTNQFTHLPVSNILDDLDFLIQIDLEDNPWDCSCDLVGLQQWIHKLGKGTMTDDILCTSPGHLDKKELKALNSDLLCPGLVNNPSMPTQTTYVIVTSPTVAADTASTLFSSLTDAVPLSVLILGLLIVFITIVFCAAGIVVFVLHRRRRYKKKKVEEQLRDNSPVHLQYSMYGHKTTHHTTERPSSSLYEQHMVSPMVHVYRSPSFGPKHLEEVEERNDKEGNDAKHLQRSLLERENHSPLTGSNMKYKTTDQSTDFISFQDASLLYRNILEKERELQQLGITEYLRKNLAQLQPEVEVNYPGAHEELKLMETLMYSRPRKVLVEQTKNEYFELKANLHAEPDYLEVLEQQT</sequence>
<feature type="signal peptide" evidence="2">
    <location>
        <begin position="1"/>
        <end position="18"/>
    </location>
</feature>
<feature type="chain" id="PRO_0000032684" description="SLIT and NTRK-like protein 6" evidence="2">
    <location>
        <begin position="19"/>
        <end position="840"/>
    </location>
</feature>
<feature type="topological domain" description="Extracellular" evidence="2">
    <location>
        <begin position="23"/>
        <end position="609"/>
    </location>
</feature>
<feature type="transmembrane region" description="Helical" evidence="2">
    <location>
        <begin position="610"/>
        <end position="630"/>
    </location>
</feature>
<feature type="topological domain" description="Cytoplasmic" evidence="2">
    <location>
        <begin position="631"/>
        <end position="840"/>
    </location>
</feature>
<feature type="domain" description="LRRNT 1">
    <location>
        <begin position="22"/>
        <end position="67"/>
    </location>
</feature>
<feature type="repeat" description="LRR 1">
    <location>
        <begin position="89"/>
        <end position="110"/>
    </location>
</feature>
<feature type="repeat" description="LRR 2">
    <location>
        <begin position="113"/>
        <end position="134"/>
    </location>
</feature>
<feature type="repeat" description="LRR 3">
    <location>
        <begin position="137"/>
        <end position="158"/>
    </location>
</feature>
<feature type="repeat" description="LRR 4">
    <location>
        <begin position="161"/>
        <end position="182"/>
    </location>
</feature>
<feature type="repeat" description="LRR 5">
    <location>
        <begin position="184"/>
        <end position="205"/>
    </location>
</feature>
<feature type="domain" description="LRRCT 1">
    <location>
        <begin position="218"/>
        <end position="269"/>
    </location>
</feature>
<feature type="domain" description="LRRNT 2">
    <location>
        <begin position="319"/>
        <end position="360"/>
    </location>
</feature>
<feature type="repeat" description="LRR 6">
    <location>
        <begin position="363"/>
        <end position="384"/>
    </location>
</feature>
<feature type="repeat" description="LRR 7">
    <location>
        <begin position="387"/>
        <end position="408"/>
    </location>
</feature>
<feature type="repeat" description="LRR 8">
    <location>
        <begin position="411"/>
        <end position="432"/>
    </location>
</feature>
<feature type="repeat" description="LRR 9">
    <location>
        <begin position="435"/>
        <end position="456"/>
    </location>
</feature>
<feature type="repeat" description="LRR 10">
    <location>
        <begin position="459"/>
        <end position="480"/>
    </location>
</feature>
<feature type="repeat" description="LRR 11">
    <location>
        <begin position="482"/>
        <end position="503"/>
    </location>
</feature>
<feature type="domain" description="LRRCT 2">
    <location>
        <begin position="516"/>
        <end position="567"/>
    </location>
</feature>
<feature type="region of interest" description="Disordered" evidence="3">
    <location>
        <begin position="717"/>
        <end position="736"/>
    </location>
</feature>
<feature type="compositionally biased region" description="Basic and acidic residues" evidence="3">
    <location>
        <begin position="717"/>
        <end position="726"/>
    </location>
</feature>
<feature type="compositionally biased region" description="Polar residues" evidence="3">
    <location>
        <begin position="727"/>
        <end position="736"/>
    </location>
</feature>
<evidence type="ECO:0000250" key="1"/>
<evidence type="ECO:0000255" key="2"/>
<evidence type="ECO:0000256" key="3">
    <source>
        <dbReference type="SAM" id="MobiDB-lite"/>
    </source>
</evidence>
<evidence type="ECO:0000269" key="4">
    <source>
    </source>
</evidence>
<evidence type="ECO:0000269" key="5">
    <source>
    </source>
</evidence>
<evidence type="ECO:0000269" key="6">
    <source>
    </source>
</evidence>
<evidence type="ECO:0000269" key="7">
    <source>
    </source>
</evidence>
<evidence type="ECO:0000269" key="8">
    <source>
    </source>
</evidence>
<evidence type="ECO:0000305" key="9"/>
<evidence type="ECO:0000312" key="10">
    <source>
        <dbReference type="EMBL" id="BAC26368.1"/>
    </source>
</evidence>
<dbReference type="EMBL" id="AB097575">
    <property type="protein sequence ID" value="BAC67209.1"/>
    <property type="molecule type" value="Genomic_DNA"/>
</dbReference>
<dbReference type="EMBL" id="AK029275">
    <property type="protein sequence ID" value="BAC26368.1"/>
    <property type="molecule type" value="mRNA"/>
</dbReference>
<dbReference type="CCDS" id="CCDS27326.1"/>
<dbReference type="RefSeq" id="NP_780708.1">
    <property type="nucleotide sequence ID" value="NM_175499.4"/>
</dbReference>
<dbReference type="SMR" id="Q8C110"/>
<dbReference type="FunCoup" id="Q8C110">
    <property type="interactions" value="757"/>
</dbReference>
<dbReference type="IntAct" id="Q8C110">
    <property type="interactions" value="1"/>
</dbReference>
<dbReference type="STRING" id="10090.ENSMUSP00000077492"/>
<dbReference type="GlyGen" id="Q8C110">
    <property type="glycosylation" value="2 sites, 1 N-linked glycan (1 site)"/>
</dbReference>
<dbReference type="iPTMnet" id="Q8C110"/>
<dbReference type="PhosphoSitePlus" id="Q8C110"/>
<dbReference type="PaxDb" id="10090-ENSMUSP00000077492"/>
<dbReference type="ProteomicsDB" id="258695"/>
<dbReference type="Antibodypedia" id="24756">
    <property type="antibodies" value="260 antibodies from 32 providers"/>
</dbReference>
<dbReference type="DNASU" id="239250"/>
<dbReference type="Ensembl" id="ENSMUST00000078386.4">
    <property type="protein sequence ID" value="ENSMUSP00000077492.3"/>
    <property type="gene ID" value="ENSMUSG00000045871.6"/>
</dbReference>
<dbReference type="GeneID" id="239250"/>
<dbReference type="KEGG" id="mmu:239250"/>
<dbReference type="UCSC" id="uc007uyd.2">
    <property type="organism name" value="mouse"/>
</dbReference>
<dbReference type="AGR" id="MGI:2443198"/>
<dbReference type="CTD" id="84189"/>
<dbReference type="MGI" id="MGI:2443198">
    <property type="gene designation" value="Slitrk6"/>
</dbReference>
<dbReference type="VEuPathDB" id="HostDB:ENSMUSG00000045871"/>
<dbReference type="eggNOG" id="ENOG502QZTX">
    <property type="taxonomic scope" value="Eukaryota"/>
</dbReference>
<dbReference type="GeneTree" id="ENSGT00940000160718"/>
<dbReference type="HOGENOM" id="CLU_012706_1_0_1"/>
<dbReference type="InParanoid" id="Q8C110"/>
<dbReference type="OMA" id="IIGDIVC"/>
<dbReference type="OrthoDB" id="676979at2759"/>
<dbReference type="PhylomeDB" id="Q8C110"/>
<dbReference type="TreeFam" id="TF326378"/>
<dbReference type="Reactome" id="R-MMU-388844">
    <property type="pathway name" value="Receptor-type tyrosine-protein phosphatases"/>
</dbReference>
<dbReference type="BioGRID-ORCS" id="239250">
    <property type="hits" value="0 hits in 76 CRISPR screens"/>
</dbReference>
<dbReference type="PRO" id="PR:Q8C110"/>
<dbReference type="Proteomes" id="UP000000589">
    <property type="component" value="Chromosome 14"/>
</dbReference>
<dbReference type="RNAct" id="Q8C110">
    <property type="molecule type" value="protein"/>
</dbReference>
<dbReference type="Bgee" id="ENSMUSG00000045871">
    <property type="expression patterns" value="Expressed in vestibular organ and 145 other cell types or tissues"/>
</dbReference>
<dbReference type="ExpressionAtlas" id="Q8C110">
    <property type="expression patterns" value="baseline and differential"/>
</dbReference>
<dbReference type="GO" id="GO:0071944">
    <property type="term" value="C:cell periphery"/>
    <property type="evidence" value="ECO:0000314"/>
    <property type="project" value="MGI"/>
</dbReference>
<dbReference type="GO" id="GO:0009986">
    <property type="term" value="C:cell surface"/>
    <property type="evidence" value="ECO:0000266"/>
    <property type="project" value="MGI"/>
</dbReference>
<dbReference type="GO" id="GO:0016020">
    <property type="term" value="C:membrane"/>
    <property type="evidence" value="ECO:0000250"/>
    <property type="project" value="MGI"/>
</dbReference>
<dbReference type="GO" id="GO:0005886">
    <property type="term" value="C:plasma membrane"/>
    <property type="evidence" value="ECO:0000250"/>
    <property type="project" value="UniProtKB"/>
</dbReference>
<dbReference type="GO" id="GO:0008344">
    <property type="term" value="P:adult locomotory behavior"/>
    <property type="evidence" value="ECO:0000315"/>
    <property type="project" value="MGI"/>
</dbReference>
<dbReference type="GO" id="GO:0031223">
    <property type="term" value="P:auditory behavior"/>
    <property type="evidence" value="ECO:0000315"/>
    <property type="project" value="MGI"/>
</dbReference>
<dbReference type="GO" id="GO:0002093">
    <property type="term" value="P:auditory receptor cell morphogenesis"/>
    <property type="evidence" value="ECO:0000315"/>
    <property type="project" value="MGI"/>
</dbReference>
<dbReference type="GO" id="GO:0007409">
    <property type="term" value="P:axonogenesis"/>
    <property type="evidence" value="ECO:0000314"/>
    <property type="project" value="MGI"/>
</dbReference>
<dbReference type="GO" id="GO:0043010">
    <property type="term" value="P:camera-type eye development"/>
    <property type="evidence" value="ECO:0000315"/>
    <property type="project" value="MGI"/>
</dbReference>
<dbReference type="GO" id="GO:0090102">
    <property type="term" value="P:cochlea development"/>
    <property type="evidence" value="ECO:0000315"/>
    <property type="project" value="MGI"/>
</dbReference>
<dbReference type="GO" id="GO:0042472">
    <property type="term" value="P:inner ear morphogenesis"/>
    <property type="evidence" value="ECO:0000315"/>
    <property type="project" value="MGI"/>
</dbReference>
<dbReference type="GO" id="GO:0060384">
    <property type="term" value="P:innervation"/>
    <property type="evidence" value="ECO:0000315"/>
    <property type="project" value="MGI"/>
</dbReference>
<dbReference type="GO" id="GO:0002088">
    <property type="term" value="P:lens development in camera-type eye"/>
    <property type="evidence" value="ECO:0000315"/>
    <property type="project" value="MGI"/>
</dbReference>
<dbReference type="GO" id="GO:0060007">
    <property type="term" value="P:linear vestibuloocular reflex"/>
    <property type="evidence" value="ECO:0000315"/>
    <property type="project" value="MGI"/>
</dbReference>
<dbReference type="GO" id="GO:0035264">
    <property type="term" value="P:multicellular organism growth"/>
    <property type="evidence" value="ECO:0000315"/>
    <property type="project" value="MGI"/>
</dbReference>
<dbReference type="GO" id="GO:0048812">
    <property type="term" value="P:neuron projection morphogenesis"/>
    <property type="evidence" value="ECO:0000315"/>
    <property type="project" value="MGI"/>
</dbReference>
<dbReference type="GO" id="GO:0051965">
    <property type="term" value="P:positive regulation of synapse assembly"/>
    <property type="evidence" value="ECO:0000314"/>
    <property type="project" value="MGI"/>
</dbReference>
<dbReference type="GO" id="GO:0007605">
    <property type="term" value="P:sensory perception of sound"/>
    <property type="evidence" value="ECO:0007669"/>
    <property type="project" value="UniProtKB-KW"/>
</dbReference>
<dbReference type="GO" id="GO:0001964">
    <property type="term" value="P:startle response"/>
    <property type="evidence" value="ECO:0000315"/>
    <property type="project" value="MGI"/>
</dbReference>
<dbReference type="GO" id="GO:0007416">
    <property type="term" value="P:synapse assembly"/>
    <property type="evidence" value="ECO:0000315"/>
    <property type="project" value="MGI"/>
</dbReference>
<dbReference type="GO" id="GO:0060005">
    <property type="term" value="P:vestibular reflex"/>
    <property type="evidence" value="ECO:0000315"/>
    <property type="project" value="MGI"/>
</dbReference>
<dbReference type="GO" id="GO:0021562">
    <property type="term" value="P:vestibulocochlear nerve development"/>
    <property type="evidence" value="ECO:0000315"/>
    <property type="project" value="MGI"/>
</dbReference>
<dbReference type="GO" id="GO:0007601">
    <property type="term" value="P:visual perception"/>
    <property type="evidence" value="ECO:0000315"/>
    <property type="project" value="MGI"/>
</dbReference>
<dbReference type="FunFam" id="3.80.10.10:FF:000001">
    <property type="entry name" value="SLIT and NTRK-like family, member 1"/>
    <property type="match status" value="2"/>
</dbReference>
<dbReference type="Gene3D" id="3.80.10.10">
    <property type="entry name" value="Ribonuclease Inhibitor"/>
    <property type="match status" value="2"/>
</dbReference>
<dbReference type="InterPro" id="IPR000483">
    <property type="entry name" value="Cys-rich_flank_reg_C"/>
</dbReference>
<dbReference type="InterPro" id="IPR001611">
    <property type="entry name" value="Leu-rich_rpt"/>
</dbReference>
<dbReference type="InterPro" id="IPR003591">
    <property type="entry name" value="Leu-rich_rpt_typical-subtyp"/>
</dbReference>
<dbReference type="InterPro" id="IPR032675">
    <property type="entry name" value="LRR_dom_sf"/>
</dbReference>
<dbReference type="PANTHER" id="PTHR45773">
    <property type="entry name" value="SLIT AND NTRK-LIKE PROTEIN 4-RELATED"/>
    <property type="match status" value="1"/>
</dbReference>
<dbReference type="PANTHER" id="PTHR45773:SF1">
    <property type="entry name" value="SLIT AND NTRK-LIKE PROTEIN 6"/>
    <property type="match status" value="1"/>
</dbReference>
<dbReference type="Pfam" id="PF13855">
    <property type="entry name" value="LRR_8"/>
    <property type="match status" value="2"/>
</dbReference>
<dbReference type="SMART" id="SM00369">
    <property type="entry name" value="LRR_TYP"/>
    <property type="match status" value="9"/>
</dbReference>
<dbReference type="SMART" id="SM00082">
    <property type="entry name" value="LRRCT"/>
    <property type="match status" value="2"/>
</dbReference>
<dbReference type="SUPFAM" id="SSF52058">
    <property type="entry name" value="L domain-like"/>
    <property type="match status" value="2"/>
</dbReference>
<dbReference type="PROSITE" id="PS51450">
    <property type="entry name" value="LRR"/>
    <property type="match status" value="10"/>
</dbReference>
<reference evidence="9" key="1">
    <citation type="journal article" date="2003" name="Mol. Cell. Neurosci.">
        <title>Identification and characterization of Slitrk, a novel neuronal transmembrane protein family controlling neurite outgrowth.</title>
        <authorList>
            <person name="Aruga J."/>
            <person name="Mikoshiba K."/>
        </authorList>
    </citation>
    <scope>NUCLEOTIDE SEQUENCE [GENOMIC DNA]</scope>
    <scope>FUNCTION</scope>
</reference>
<reference key="2">
    <citation type="journal article" date="2005" name="Science">
        <title>The transcriptional landscape of the mammalian genome.</title>
        <authorList>
            <person name="Carninci P."/>
            <person name="Kasukawa T."/>
            <person name="Katayama S."/>
            <person name="Gough J."/>
            <person name="Frith M.C."/>
            <person name="Maeda N."/>
            <person name="Oyama R."/>
            <person name="Ravasi T."/>
            <person name="Lenhard B."/>
            <person name="Wells C."/>
            <person name="Kodzius R."/>
            <person name="Shimokawa K."/>
            <person name="Bajic V.B."/>
            <person name="Brenner S.E."/>
            <person name="Batalov S."/>
            <person name="Forrest A.R."/>
            <person name="Zavolan M."/>
            <person name="Davis M.J."/>
            <person name="Wilming L.G."/>
            <person name="Aidinis V."/>
            <person name="Allen J.E."/>
            <person name="Ambesi-Impiombato A."/>
            <person name="Apweiler R."/>
            <person name="Aturaliya R.N."/>
            <person name="Bailey T.L."/>
            <person name="Bansal M."/>
            <person name="Baxter L."/>
            <person name="Beisel K.W."/>
            <person name="Bersano T."/>
            <person name="Bono H."/>
            <person name="Chalk A.M."/>
            <person name="Chiu K.P."/>
            <person name="Choudhary V."/>
            <person name="Christoffels A."/>
            <person name="Clutterbuck D.R."/>
            <person name="Crowe M.L."/>
            <person name="Dalla E."/>
            <person name="Dalrymple B.P."/>
            <person name="de Bono B."/>
            <person name="Della Gatta G."/>
            <person name="di Bernardo D."/>
            <person name="Down T."/>
            <person name="Engstrom P."/>
            <person name="Fagiolini M."/>
            <person name="Faulkner G."/>
            <person name="Fletcher C.F."/>
            <person name="Fukushima T."/>
            <person name="Furuno M."/>
            <person name="Futaki S."/>
            <person name="Gariboldi M."/>
            <person name="Georgii-Hemming P."/>
            <person name="Gingeras T.R."/>
            <person name="Gojobori T."/>
            <person name="Green R.E."/>
            <person name="Gustincich S."/>
            <person name="Harbers M."/>
            <person name="Hayashi Y."/>
            <person name="Hensch T.K."/>
            <person name="Hirokawa N."/>
            <person name="Hill D."/>
            <person name="Huminiecki L."/>
            <person name="Iacono M."/>
            <person name="Ikeo K."/>
            <person name="Iwama A."/>
            <person name="Ishikawa T."/>
            <person name="Jakt M."/>
            <person name="Kanapin A."/>
            <person name="Katoh M."/>
            <person name="Kawasawa Y."/>
            <person name="Kelso J."/>
            <person name="Kitamura H."/>
            <person name="Kitano H."/>
            <person name="Kollias G."/>
            <person name="Krishnan S.P."/>
            <person name="Kruger A."/>
            <person name="Kummerfeld S.K."/>
            <person name="Kurochkin I.V."/>
            <person name="Lareau L.F."/>
            <person name="Lazarevic D."/>
            <person name="Lipovich L."/>
            <person name="Liu J."/>
            <person name="Liuni S."/>
            <person name="McWilliam S."/>
            <person name="Madan Babu M."/>
            <person name="Madera M."/>
            <person name="Marchionni L."/>
            <person name="Matsuda H."/>
            <person name="Matsuzawa S."/>
            <person name="Miki H."/>
            <person name="Mignone F."/>
            <person name="Miyake S."/>
            <person name="Morris K."/>
            <person name="Mottagui-Tabar S."/>
            <person name="Mulder N."/>
            <person name="Nakano N."/>
            <person name="Nakauchi H."/>
            <person name="Ng P."/>
            <person name="Nilsson R."/>
            <person name="Nishiguchi S."/>
            <person name="Nishikawa S."/>
            <person name="Nori F."/>
            <person name="Ohara O."/>
            <person name="Okazaki Y."/>
            <person name="Orlando V."/>
            <person name="Pang K.C."/>
            <person name="Pavan W.J."/>
            <person name="Pavesi G."/>
            <person name="Pesole G."/>
            <person name="Petrovsky N."/>
            <person name="Piazza S."/>
            <person name="Reed J."/>
            <person name="Reid J.F."/>
            <person name="Ring B.Z."/>
            <person name="Ringwald M."/>
            <person name="Rost B."/>
            <person name="Ruan Y."/>
            <person name="Salzberg S.L."/>
            <person name="Sandelin A."/>
            <person name="Schneider C."/>
            <person name="Schoenbach C."/>
            <person name="Sekiguchi K."/>
            <person name="Semple C.A."/>
            <person name="Seno S."/>
            <person name="Sessa L."/>
            <person name="Sheng Y."/>
            <person name="Shibata Y."/>
            <person name="Shimada H."/>
            <person name="Shimada K."/>
            <person name="Silva D."/>
            <person name="Sinclair B."/>
            <person name="Sperling S."/>
            <person name="Stupka E."/>
            <person name="Sugiura K."/>
            <person name="Sultana R."/>
            <person name="Takenaka Y."/>
            <person name="Taki K."/>
            <person name="Tammoja K."/>
            <person name="Tan S.L."/>
            <person name="Tang S."/>
            <person name="Taylor M.S."/>
            <person name="Tegner J."/>
            <person name="Teichmann S.A."/>
            <person name="Ueda H.R."/>
            <person name="van Nimwegen E."/>
            <person name="Verardo R."/>
            <person name="Wei C.L."/>
            <person name="Yagi K."/>
            <person name="Yamanishi H."/>
            <person name="Zabarovsky E."/>
            <person name="Zhu S."/>
            <person name="Zimmer A."/>
            <person name="Hide W."/>
            <person name="Bult C."/>
            <person name="Grimmond S.M."/>
            <person name="Teasdale R.D."/>
            <person name="Liu E.T."/>
            <person name="Brusic V."/>
            <person name="Quackenbush J."/>
            <person name="Wahlestedt C."/>
            <person name="Mattick J.S."/>
            <person name="Hume D.A."/>
            <person name="Kai C."/>
            <person name="Sasaki D."/>
            <person name="Tomaru Y."/>
            <person name="Fukuda S."/>
            <person name="Kanamori-Katayama M."/>
            <person name="Suzuki M."/>
            <person name="Aoki J."/>
            <person name="Arakawa T."/>
            <person name="Iida J."/>
            <person name="Imamura K."/>
            <person name="Itoh M."/>
            <person name="Kato T."/>
            <person name="Kawaji H."/>
            <person name="Kawagashira N."/>
            <person name="Kawashima T."/>
            <person name="Kojima M."/>
            <person name="Kondo S."/>
            <person name="Konno H."/>
            <person name="Nakano K."/>
            <person name="Ninomiya N."/>
            <person name="Nishio T."/>
            <person name="Okada M."/>
            <person name="Plessy C."/>
            <person name="Shibata K."/>
            <person name="Shiraki T."/>
            <person name="Suzuki S."/>
            <person name="Tagami M."/>
            <person name="Waki K."/>
            <person name="Watahiki A."/>
            <person name="Okamura-Oho Y."/>
            <person name="Suzuki H."/>
            <person name="Kawai J."/>
            <person name="Hayashizaki Y."/>
        </authorList>
    </citation>
    <scope>NUCLEOTIDE SEQUENCE [LARGE SCALE MRNA]</scope>
    <source>
        <strain>C57BL/6J</strain>
        <tissue>Head</tissue>
    </source>
</reference>
<reference evidence="9" key="3">
    <citation type="journal article" date="2003" name="Gene Expr. Patterns">
        <title>Slitrk6 expression profile in the mouse embryo and its relationship to that of Nlrr3.</title>
        <authorList>
            <person name="Aruga J."/>
        </authorList>
    </citation>
    <scope>TISSUE SPECIFICITY</scope>
    <scope>DEVELOPMENTAL STAGE</scope>
</reference>
<reference key="4">
    <citation type="journal article" date="2009" name="PLoS ONE">
        <title>Disorganized innervation and neuronal loss in the inner ear of Slitrk6-deficient mice.</title>
        <authorList>
            <person name="Katayama K."/>
            <person name="Zine A."/>
            <person name="Ota M."/>
            <person name="Matsumoto Y."/>
            <person name="Inoue T."/>
            <person name="Fritzsch B."/>
            <person name="Aruga J."/>
        </authorList>
    </citation>
    <scope>DISRUPTION PHENOTYPE</scope>
    <scope>DEVELOPMENTAL STAGE</scope>
</reference>
<reference key="5">
    <citation type="journal article" date="2011" name="PLoS ONE">
        <title>Impaired auditory-vestibular functions and behavioral abnormalities of Slitrk6-deficient mice.</title>
        <authorList>
            <person name="Matsumoto Y."/>
            <person name="Katayama K."/>
            <person name="Okamoto T."/>
            <person name="Yamada K."/>
            <person name="Takashima N."/>
            <person name="Nagao S."/>
            <person name="Aruga J."/>
        </authorList>
    </citation>
    <scope>DISRUPTION PHENOTYPE</scope>
</reference>
<reference key="6">
    <citation type="journal article" date="2013" name="J. Clin. Invest.">
        <title>SLITRK6 mutations cause myopia and deafness in humans and mice.</title>
        <authorList>
            <person name="Tekin M."/>
            <person name="Chioza B.A."/>
            <person name="Matsumoto Y."/>
            <person name="Diaz-Horta O."/>
            <person name="Cross H.E."/>
            <person name="Duman D."/>
            <person name="Kokotas H."/>
            <person name="Moore-Barton H.L."/>
            <person name="Sakoori K."/>
            <person name="Ota M."/>
            <person name="Odaka Y.S."/>
            <person name="Foster J. II"/>
            <person name="Cengiz F.B."/>
            <person name="Tokgoz-Yilmaz S."/>
            <person name="Tekeli O."/>
            <person name="Grigoriadou M."/>
            <person name="Petersen M.B."/>
            <person name="Sreekantan-Nair A."/>
            <person name="Gurtz K."/>
            <person name="Xia X.J."/>
            <person name="Pandya A."/>
            <person name="Patton M.A."/>
            <person name="Young J.I."/>
            <person name="Aruga J."/>
            <person name="Crosby A.H."/>
        </authorList>
    </citation>
    <scope>DISRUPTION PHENOTYPE</scope>
    <scope>DEVELOPMENTAL STAGE</scope>
    <scope>FUNCTION</scope>
</reference>
<comment type="function">
    <text evidence="4 8">Regulator of neurite outgrowth required for normal hearing and vision.</text>
</comment>
<comment type="subcellular location">
    <subcellularLocation>
        <location evidence="1">Cell membrane</location>
        <topology evidence="1">Single-pass type I membrane protein</topology>
    </subcellularLocation>
</comment>
<comment type="tissue specificity">
    <text evidence="5">In the embryo, expressed in otic cyst, lateral trunk epidermis and underlying mesodermal tissue, limb bud, maxillary process, cochlea, retina, tongue, tooth primordium, central nervous system, and primordia of visceral organs including lung, gastrointestinal tract and pancreas. In the central nervous system, expressed primarily in dorsal thalamus, cerebellum and medulla.</text>
</comment>
<comment type="developmental stage">
    <text evidence="5 6 8">During inner ear development, detected early in the otic vesicle, and later in cochlear and vestibular sensory epithelia. Present in the presumptive organ of Corti by 14.5 dpc, and then confined to the supporting cell types at later stages of embryonic development and at the newborn. In the vestibular sensory epithelia, present at the lumenal surface. However, it is detected in the non-hair cell region, presumably in the lumenal processes of the supporting cells. Transiently expressed in the spiral and vestibular ganglion neurons (at protein level) (PubMed:19936227). First expressed at 8.5 dpc. In the newborn, broadly detected in neural retina. Later, in P10 retina, expression is enhanced in the inner nuclear and outer plexiform layers. Expression in retina decreases as development proceeded, and is detected in the inner nuclear layer and in a subset of cells in the ganglion cell layer of adults (PubMed:23543054).</text>
</comment>
<comment type="disruption phenotype">
    <text evidence="6 7 8">Male and female mice grow without showing any external abnormalities and are fertile but display auditory deficits. In the developing inner ear, mice show pronounced reduction of cochlear innervation, despite normal gross morphology and general organization of the organ of Corti (PubMed:19936227). Adult mice have reduced startle response and impaired auditory brainstem responses consistent with mid-frequency range hearing loss (PubMed:21298075). Retinas in postnatal development display a delay in synaptogenesis (PubMed:23543054).</text>
</comment>
<comment type="similarity">
    <text evidence="9">Belongs to the SLITRK family.</text>
</comment>
<organism evidence="10">
    <name type="scientific">Mus musculus</name>
    <name type="common">Mouse</name>
    <dbReference type="NCBI Taxonomy" id="10090"/>
    <lineage>
        <taxon>Eukaryota</taxon>
        <taxon>Metazoa</taxon>
        <taxon>Chordata</taxon>
        <taxon>Craniata</taxon>
        <taxon>Vertebrata</taxon>
        <taxon>Euteleostomi</taxon>
        <taxon>Mammalia</taxon>
        <taxon>Eutheria</taxon>
        <taxon>Euarchontoglires</taxon>
        <taxon>Glires</taxon>
        <taxon>Rodentia</taxon>
        <taxon>Myomorpha</taxon>
        <taxon>Muroidea</taxon>
        <taxon>Muridae</taxon>
        <taxon>Murinae</taxon>
        <taxon>Mus</taxon>
        <taxon>Mus</taxon>
    </lineage>
</organism>
<name>SLIK6_MOUSE</name>
<gene>
    <name type="primary">Slitrk6</name>
    <name type="synonym">Sltk6</name>
</gene>
<proteinExistence type="evidence at protein level"/>
<accession>Q8C110</accession>
<accession>Q8BLL0</accession>